<reference key="1">
    <citation type="journal article" date="2007" name="Genome Biol.">
        <title>Characterization and modeling of the Haemophilus influenzae core and supragenomes based on the complete genomic sequences of Rd and 12 clinical nontypeable strains.</title>
        <authorList>
            <person name="Hogg J.S."/>
            <person name="Hu F.Z."/>
            <person name="Janto B."/>
            <person name="Boissy R."/>
            <person name="Hayes J."/>
            <person name="Keefe R."/>
            <person name="Post J.C."/>
            <person name="Ehrlich G.D."/>
        </authorList>
    </citation>
    <scope>NUCLEOTIDE SEQUENCE [LARGE SCALE GENOMIC DNA]</scope>
    <source>
        <strain>PittGG</strain>
    </source>
</reference>
<keyword id="KW-0131">Cell cycle</keyword>
<keyword id="KW-0132">Cell division</keyword>
<keyword id="KW-0997">Cell inner membrane</keyword>
<keyword id="KW-1003">Cell membrane</keyword>
<keyword id="KW-0175">Coiled coil</keyword>
<keyword id="KW-0472">Membrane</keyword>
<keyword id="KW-0812">Transmembrane</keyword>
<keyword id="KW-1133">Transmembrane helix</keyword>
<comment type="function">
    <text evidence="1">Essential cell division protein. May link together the upstream cell division proteins, which are predominantly cytoplasmic, with the downstream cell division proteins, which are predominantly periplasmic.</text>
</comment>
<comment type="subunit">
    <text evidence="1">Part of a complex composed of FtsB, FtsL and FtsQ.</text>
</comment>
<comment type="subcellular location">
    <subcellularLocation>
        <location evidence="1">Cell inner membrane</location>
        <topology evidence="1">Single-pass type II membrane protein</topology>
    </subcellularLocation>
    <text evidence="1">Localizes to the division septum.</text>
</comment>
<comment type="similarity">
    <text evidence="1">Belongs to the FtsB family.</text>
</comment>
<protein>
    <recommendedName>
        <fullName evidence="1">Cell division protein FtsB</fullName>
    </recommendedName>
</protein>
<evidence type="ECO:0000255" key="1">
    <source>
        <dbReference type="HAMAP-Rule" id="MF_00599"/>
    </source>
</evidence>
<feature type="chain" id="PRO_1000025703" description="Cell division protein FtsB">
    <location>
        <begin position="1"/>
        <end position="92"/>
    </location>
</feature>
<feature type="topological domain" description="Cytoplasmic" evidence="1">
    <location>
        <begin position="1"/>
        <end position="3"/>
    </location>
</feature>
<feature type="transmembrane region" description="Helical" evidence="1">
    <location>
        <begin position="4"/>
        <end position="21"/>
    </location>
</feature>
<feature type="topological domain" description="Periplasmic" evidence="1">
    <location>
        <begin position="22"/>
        <end position="92"/>
    </location>
</feature>
<feature type="coiled-coil region" evidence="1">
    <location>
        <begin position="28"/>
        <end position="63"/>
    </location>
</feature>
<gene>
    <name evidence="1" type="primary">ftsB</name>
    <name type="ordered locus">CGSHiGG_06640</name>
</gene>
<name>FTSB_HAEIG</name>
<proteinExistence type="inferred from homology"/>
<accession>A5UHG2</accession>
<organism>
    <name type="scientific">Haemophilus influenzae (strain PittGG)</name>
    <dbReference type="NCBI Taxonomy" id="374931"/>
    <lineage>
        <taxon>Bacteria</taxon>
        <taxon>Pseudomonadati</taxon>
        <taxon>Pseudomonadota</taxon>
        <taxon>Gammaproteobacteria</taxon>
        <taxon>Pasteurellales</taxon>
        <taxon>Pasteurellaceae</taxon>
        <taxon>Haemophilus</taxon>
    </lineage>
</organism>
<sequence>MRLLILILLSVLVLFQYNFWFGSNGFLDYRQNAEKIKENQAENEKLSQRNQRINAEIQGLTKGFEAIEERARMQHGLVKENEVFYHIVKESK</sequence>
<dbReference type="EMBL" id="CP000672">
    <property type="protein sequence ID" value="ABR00218.1"/>
    <property type="molecule type" value="Genomic_DNA"/>
</dbReference>
<dbReference type="SMR" id="A5UHG2"/>
<dbReference type="KEGG" id="hiq:CGSHiGG_06640"/>
<dbReference type="HOGENOM" id="CLU_134863_5_2_6"/>
<dbReference type="Proteomes" id="UP000001990">
    <property type="component" value="Chromosome"/>
</dbReference>
<dbReference type="GO" id="GO:0032153">
    <property type="term" value="C:cell division site"/>
    <property type="evidence" value="ECO:0007669"/>
    <property type="project" value="UniProtKB-UniRule"/>
</dbReference>
<dbReference type="GO" id="GO:0030428">
    <property type="term" value="C:cell septum"/>
    <property type="evidence" value="ECO:0007669"/>
    <property type="project" value="TreeGrafter"/>
</dbReference>
<dbReference type="GO" id="GO:0005886">
    <property type="term" value="C:plasma membrane"/>
    <property type="evidence" value="ECO:0007669"/>
    <property type="project" value="UniProtKB-SubCell"/>
</dbReference>
<dbReference type="GO" id="GO:0043093">
    <property type="term" value="P:FtsZ-dependent cytokinesis"/>
    <property type="evidence" value="ECO:0007669"/>
    <property type="project" value="UniProtKB-UniRule"/>
</dbReference>
<dbReference type="HAMAP" id="MF_00599">
    <property type="entry name" value="FtsB"/>
    <property type="match status" value="1"/>
</dbReference>
<dbReference type="InterPro" id="IPR023081">
    <property type="entry name" value="Cell_div_FtsB"/>
</dbReference>
<dbReference type="InterPro" id="IPR007060">
    <property type="entry name" value="FtsL/DivIC"/>
</dbReference>
<dbReference type="NCBIfam" id="NF002058">
    <property type="entry name" value="PRK00888.1"/>
    <property type="match status" value="1"/>
</dbReference>
<dbReference type="PANTHER" id="PTHR37485">
    <property type="entry name" value="CELL DIVISION PROTEIN FTSB"/>
    <property type="match status" value="1"/>
</dbReference>
<dbReference type="PANTHER" id="PTHR37485:SF1">
    <property type="entry name" value="CELL DIVISION PROTEIN FTSB"/>
    <property type="match status" value="1"/>
</dbReference>
<dbReference type="Pfam" id="PF04977">
    <property type="entry name" value="DivIC"/>
    <property type="match status" value="1"/>
</dbReference>